<feature type="chain" id="PRO_0000216954" description="Fructose-bisphosphate aldolase, muscle type">
    <location>
        <begin position="1"/>
        <end position="363"/>
    </location>
</feature>
<feature type="active site" description="Schiff-base intermediate with dihydroxyacetone-P" evidence="1">
    <location>
        <position position="230"/>
    </location>
</feature>
<feature type="binding site" evidence="1">
    <location>
        <position position="56"/>
    </location>
    <ligand>
        <name>substrate</name>
    </ligand>
</feature>
<feature type="binding site" evidence="1">
    <location>
        <position position="147"/>
    </location>
    <ligand>
        <name>substrate</name>
    </ligand>
</feature>
<feature type="site" description="Necessary for preference for fructose 1,6-bisphosphate over fructose 1-phosphate">
    <location>
        <position position="363"/>
    </location>
</feature>
<organism>
    <name type="scientific">Lethenteron camtschaticum</name>
    <name type="common">Japanese lamprey</name>
    <name type="synonym">Lampetra japonica</name>
    <dbReference type="NCBI Taxonomy" id="980415"/>
    <lineage>
        <taxon>Eukaryota</taxon>
        <taxon>Metazoa</taxon>
        <taxon>Chordata</taxon>
        <taxon>Craniata</taxon>
        <taxon>Vertebrata</taxon>
        <taxon>Cyclostomata</taxon>
        <taxon>Hyperoartia</taxon>
        <taxon>Petromyzontiformes</taxon>
        <taxon>Petromyzontidae</taxon>
        <taxon>Lethenteron</taxon>
    </lineage>
</organism>
<sequence>MSPHFPALTPDQKKELADIAQRIVASGKGILAADESVGTMGKRLTQIGLENTDEHRRFYRQLLFTTDPSIKEHIGGIIFFHETMYQKTDGGVPFVKLVKDNGILVGIKVDKGVVPLAGTNGEGTTQGLDGLAERCAQYKKDGADFAKWRCVLKISPNTPSRLSIVENANVLARYATICQQNGLVPIVEPEILPDGDHDLKTCQYITEKVLAATYKALSDHHVYLEGTLLKPNMVTVGTAAPASTRPEQVAMATLTALRRTVPPAVPGITFLSGGQSEEDASIHLNAINKLHLIKPWALTFSYGRALQASVLKAWGGKKENLKAAQDELMRRAKINGQASKGEYKPTGTGAAAGESLFVANHAY</sequence>
<protein>
    <recommendedName>
        <fullName>Fructose-bisphosphate aldolase, muscle type</fullName>
        <ecNumber>4.1.2.13</ecNumber>
    </recommendedName>
</protein>
<name>ALF1_LETCA</name>
<accession>P53445</accession>
<proteinExistence type="evidence at transcript level"/>
<dbReference type="EC" id="4.1.2.13"/>
<dbReference type="EMBL" id="D38620">
    <property type="protein sequence ID" value="BAA07608.1"/>
    <property type="molecule type" value="mRNA"/>
</dbReference>
<dbReference type="SMR" id="P53445"/>
<dbReference type="SABIO-RK" id="P53445"/>
<dbReference type="UniPathway" id="UPA00109">
    <property type="reaction ID" value="UER00183"/>
</dbReference>
<dbReference type="GO" id="GO:0004332">
    <property type="term" value="F:fructose-bisphosphate aldolase activity"/>
    <property type="evidence" value="ECO:0007669"/>
    <property type="project" value="UniProtKB-EC"/>
</dbReference>
<dbReference type="GO" id="GO:0006096">
    <property type="term" value="P:glycolytic process"/>
    <property type="evidence" value="ECO:0007669"/>
    <property type="project" value="UniProtKB-UniPathway"/>
</dbReference>
<dbReference type="CDD" id="cd00948">
    <property type="entry name" value="FBP_aldolase_I_a"/>
    <property type="match status" value="1"/>
</dbReference>
<dbReference type="FunFam" id="3.20.20.70:FF:000021">
    <property type="entry name" value="Fructose-bisphosphate aldolase"/>
    <property type="match status" value="1"/>
</dbReference>
<dbReference type="Gene3D" id="3.20.20.70">
    <property type="entry name" value="Aldolase class I"/>
    <property type="match status" value="1"/>
</dbReference>
<dbReference type="InterPro" id="IPR029768">
    <property type="entry name" value="Aldolase_I_AS"/>
</dbReference>
<dbReference type="InterPro" id="IPR013785">
    <property type="entry name" value="Aldolase_TIM"/>
</dbReference>
<dbReference type="InterPro" id="IPR000741">
    <property type="entry name" value="FBA_I"/>
</dbReference>
<dbReference type="NCBIfam" id="NF033379">
    <property type="entry name" value="FrucBisAld_I"/>
    <property type="match status" value="1"/>
</dbReference>
<dbReference type="PANTHER" id="PTHR11627">
    <property type="entry name" value="FRUCTOSE-BISPHOSPHATE ALDOLASE"/>
    <property type="match status" value="1"/>
</dbReference>
<dbReference type="Pfam" id="PF00274">
    <property type="entry name" value="Glycolytic"/>
    <property type="match status" value="1"/>
</dbReference>
<dbReference type="SUPFAM" id="SSF51569">
    <property type="entry name" value="Aldolase"/>
    <property type="match status" value="1"/>
</dbReference>
<dbReference type="PROSITE" id="PS00158">
    <property type="entry name" value="ALDOLASE_CLASS_I"/>
    <property type="match status" value="1"/>
</dbReference>
<comment type="catalytic activity">
    <reaction>
        <text>beta-D-fructose 1,6-bisphosphate = D-glyceraldehyde 3-phosphate + dihydroxyacetone phosphate</text>
        <dbReference type="Rhea" id="RHEA:14729"/>
        <dbReference type="ChEBI" id="CHEBI:32966"/>
        <dbReference type="ChEBI" id="CHEBI:57642"/>
        <dbReference type="ChEBI" id="CHEBI:59776"/>
        <dbReference type="EC" id="4.1.2.13"/>
    </reaction>
</comment>
<comment type="pathway">
    <text>Carbohydrate degradation; glycolysis; D-glyceraldehyde 3-phosphate and glycerone phosphate from D-glucose: step 4/4.</text>
</comment>
<comment type="subunit">
    <text evidence="1">Homotetramer.</text>
</comment>
<comment type="tissue specificity">
    <text evidence="2">Expressed mainly in the skeletal muscle, heart muscle, brain, and some other tissues, but probably not in liver.</text>
</comment>
<comment type="similarity">
    <text evidence="3">Belongs to the class I fructose-bisphosphate aldolase family.</text>
</comment>
<keyword id="KW-0324">Glycolysis</keyword>
<keyword id="KW-0456">Lyase</keyword>
<keyword id="KW-0704">Schiff base</keyword>
<reference key="1">
    <citation type="journal article" date="1995" name="J. Biochem.">
        <title>Structures of cDNAs encoding the muscle-type and non-muscle-type isozymes of lamprey fructose bisphosphate aldolases and the evolution of aldolase genes.</title>
        <authorList>
            <person name="Zhang R."/>
            <person name="Yatsuki H."/>
            <person name="Kusakabe T."/>
            <person name="Iwabe N."/>
            <person name="Miyata T."/>
            <person name="Imai T."/>
            <person name="Yoshida M."/>
            <person name="Hori K."/>
        </authorList>
    </citation>
    <scope>NUCLEOTIDE SEQUENCE [MRNA]</scope>
    <scope>TISSUE SPECIFICITY</scope>
</reference>
<evidence type="ECO:0000250" key="1"/>
<evidence type="ECO:0000269" key="2">
    <source>
    </source>
</evidence>
<evidence type="ECO:0000305" key="3"/>